<feature type="chain" id="PRO_0000309002" description="DNA-directed RNA polymerase subunit beta'">
    <location>
        <begin position="1"/>
        <end position="834"/>
    </location>
</feature>
<feature type="binding site" evidence="2">
    <location>
        <position position="88"/>
    </location>
    <ligand>
        <name>Zn(2+)</name>
        <dbReference type="ChEBI" id="CHEBI:29105"/>
    </ligand>
</feature>
<feature type="binding site" evidence="2">
    <location>
        <position position="90"/>
    </location>
    <ligand>
        <name>Zn(2+)</name>
        <dbReference type="ChEBI" id="CHEBI:29105"/>
    </ligand>
</feature>
<feature type="binding site" evidence="2">
    <location>
        <position position="104"/>
    </location>
    <ligand>
        <name>Zn(2+)</name>
        <dbReference type="ChEBI" id="CHEBI:29105"/>
    </ligand>
</feature>
<feature type="binding site" evidence="2">
    <location>
        <position position="107"/>
    </location>
    <ligand>
        <name>Zn(2+)</name>
        <dbReference type="ChEBI" id="CHEBI:29105"/>
    </ligand>
</feature>
<feature type="binding site" evidence="2">
    <location>
        <position position="641"/>
    </location>
    <ligand>
        <name>Mg(2+)</name>
        <dbReference type="ChEBI" id="CHEBI:18420"/>
    </ligand>
</feature>
<feature type="binding site" evidence="2">
    <location>
        <position position="643"/>
    </location>
    <ligand>
        <name>Mg(2+)</name>
        <dbReference type="ChEBI" id="CHEBI:18420"/>
    </ligand>
</feature>
<feature type="binding site" evidence="2">
    <location>
        <position position="645"/>
    </location>
    <ligand>
        <name>Mg(2+)</name>
        <dbReference type="ChEBI" id="CHEBI:18420"/>
    </ligand>
</feature>
<protein>
    <recommendedName>
        <fullName evidence="3">DNA-directed RNA polymerase subunit beta'</fullName>
        <shortName>RNAP subunit gamma</shortName>
        <ecNumber>2.7.7.6</ecNumber>
    </recommendedName>
    <alternativeName>
        <fullName>RNA polymerase subunit gamma</fullName>
    </alternativeName>
    <alternativeName>
        <fullName>Transcriptase subunit gamma</fullName>
    </alternativeName>
</protein>
<geneLocation type="non-photosynthetic plastid"/>
<organism>
    <name type="scientific">Helicosporidium sp. subsp. Simulium jonesii</name>
    <name type="common">Green alga</name>
    <dbReference type="NCBI Taxonomy" id="145475"/>
    <lineage>
        <taxon>Eukaryota</taxon>
        <taxon>Viridiplantae</taxon>
        <taxon>Chlorophyta</taxon>
        <taxon>core chlorophytes</taxon>
        <taxon>Trebouxiophyceae</taxon>
        <taxon>Chlorellales</taxon>
        <taxon>Chlorellaceae</taxon>
        <taxon>Helicosporidium</taxon>
    </lineage>
</organism>
<evidence type="ECO:0000250" key="1"/>
<evidence type="ECO:0000250" key="2">
    <source>
        <dbReference type="UniProtKB" id="P0A8T7"/>
    </source>
</evidence>
<evidence type="ECO:0000305" key="3"/>
<proteinExistence type="inferred from homology"/>
<name>RPOC1_HELSJ</name>
<keyword id="KW-0240">DNA-directed RNA polymerase</keyword>
<keyword id="KW-0460">Magnesium</keyword>
<keyword id="KW-0479">Metal-binding</keyword>
<keyword id="KW-0548">Nucleotidyltransferase</keyword>
<keyword id="KW-0934">Plastid</keyword>
<keyword id="KW-0804">Transcription</keyword>
<keyword id="KW-0808">Transferase</keyword>
<keyword id="KW-0862">Zinc</keyword>
<sequence>MKYFIIRSLINKSKNFYNTIIKYNKTKLFALELSIISPQEIQNSAEYKREDGSIVGKVEDSTFYDLEKVNNKNLFSQQIFGPLIDFTCACGKKLNRKNKEINVCTKCGIEFLPSSIRSKRKGYIKLNYAMLHPFYIDYCEKLLMKSKKSLHLLLNMDSFFYFPSYKNWVNFLSEKNHIYLFLLKKILIYNRYSYIYKYSTFFKNRSKFPNNKKMNKLFFYNALGFYGLNSRKTWTVLDFIKGYNFFLGNFSKYYKKLSWYAYQQKISLNKYKSNNISINNFIDNTFNFYKNEVNSLCFKVGGDGIEMFFLQDMAVYSIINKFLKLRVLKLNNLINVNNKYYGKINTIIQNSKNYQYYFKHFYLKKIAPVWMTLRRIPVLPPNLRPILDLSGKNYQKTASSGTLLFMRDIMHEGNLFISDINTFYREIIIHNKKAFNFFSSLPTLYYLNELNIEYVNSKLWLLKYYLMPIQKSITSLFDKNPETINNFSNKKFTDLILDNVKPTSILDSLKGKYGKIRFNLLGKRVDYSGRSVIISAPHLKIYECGIPYEMALTLYYPFLSEYFYKKNNNILKKNYNKSELVLYSKSLIFTKSLQSILLSHPIIINRAPTLHRLGIQSFLPKLTHSKAIELHPLVCPAFNADFDGDQMAIHVPITEIAKLEAIQLMASSLFVYAPASGLPLLIPTQDIILGFNFYTNDLLLKTSREDKSIKQAMNQGFINECHIPYWIKINTKDIFFKFLAYPLRNYIIPIELQLNIKGFSKIIRLNTFKVTNLVFDSLDLLIKKNYISNWLILNNTKFKYLLISFLQNKNLLTNKQVYLRTTLGNIYFNKYLNL</sequence>
<gene>
    <name type="primary">rpoC1</name>
</gene>
<reference key="1">
    <citation type="journal article" date="2006" name="BMC Biol.">
        <title>The complete plastid genome sequence of the parasitic green alga, Helicosporidium sp. is highly reduced and structured.</title>
        <authorList>
            <person name="de Koning A.P."/>
            <person name="Keeling P.J."/>
        </authorList>
    </citation>
    <scope>NUCLEOTIDE SEQUENCE [LARGE SCALE GENOMIC DNA]</scope>
</reference>
<accession>Q2EEW9</accession>
<dbReference type="EC" id="2.7.7.6"/>
<dbReference type="EMBL" id="DQ398104">
    <property type="protein sequence ID" value="ABD33973.1"/>
    <property type="molecule type" value="Genomic_DNA"/>
</dbReference>
<dbReference type="RefSeq" id="YP_635925.1">
    <property type="nucleotide sequence ID" value="NC_008100.1"/>
</dbReference>
<dbReference type="GeneID" id="4100416"/>
<dbReference type="GO" id="GO:0000428">
    <property type="term" value="C:DNA-directed RNA polymerase complex"/>
    <property type="evidence" value="ECO:0007669"/>
    <property type="project" value="UniProtKB-KW"/>
</dbReference>
<dbReference type="GO" id="GO:0005739">
    <property type="term" value="C:mitochondrion"/>
    <property type="evidence" value="ECO:0007669"/>
    <property type="project" value="GOC"/>
</dbReference>
<dbReference type="GO" id="GO:0009536">
    <property type="term" value="C:plastid"/>
    <property type="evidence" value="ECO:0007669"/>
    <property type="project" value="UniProtKB-SubCell"/>
</dbReference>
<dbReference type="GO" id="GO:0003677">
    <property type="term" value="F:DNA binding"/>
    <property type="evidence" value="ECO:0007669"/>
    <property type="project" value="InterPro"/>
</dbReference>
<dbReference type="GO" id="GO:0003899">
    <property type="term" value="F:DNA-directed RNA polymerase activity"/>
    <property type="evidence" value="ECO:0007669"/>
    <property type="project" value="UniProtKB-EC"/>
</dbReference>
<dbReference type="GO" id="GO:0046872">
    <property type="term" value="F:metal ion binding"/>
    <property type="evidence" value="ECO:0007669"/>
    <property type="project" value="UniProtKB-KW"/>
</dbReference>
<dbReference type="GO" id="GO:0006351">
    <property type="term" value="P:DNA-templated transcription"/>
    <property type="evidence" value="ECO:0007669"/>
    <property type="project" value="InterPro"/>
</dbReference>
<dbReference type="Gene3D" id="2.40.40.20">
    <property type="match status" value="1"/>
</dbReference>
<dbReference type="Gene3D" id="1.10.274.100">
    <property type="entry name" value="RNA polymerase Rpb1, domain 3"/>
    <property type="match status" value="1"/>
</dbReference>
<dbReference type="InterPro" id="IPR045867">
    <property type="entry name" value="DNA-dir_RpoC_beta_prime"/>
</dbReference>
<dbReference type="InterPro" id="IPR000722">
    <property type="entry name" value="RNA_pol_asu"/>
</dbReference>
<dbReference type="InterPro" id="IPR006592">
    <property type="entry name" value="RNA_pol_N"/>
</dbReference>
<dbReference type="InterPro" id="IPR007080">
    <property type="entry name" value="RNA_pol_Rpb1_1"/>
</dbReference>
<dbReference type="InterPro" id="IPR042102">
    <property type="entry name" value="RNA_pol_Rpb1_3_sf"/>
</dbReference>
<dbReference type="PANTHER" id="PTHR19376">
    <property type="entry name" value="DNA-DIRECTED RNA POLYMERASE"/>
    <property type="match status" value="1"/>
</dbReference>
<dbReference type="PANTHER" id="PTHR19376:SF54">
    <property type="entry name" value="DNA-DIRECTED RNA POLYMERASE SUBUNIT BETA"/>
    <property type="match status" value="1"/>
</dbReference>
<dbReference type="Pfam" id="PF04997">
    <property type="entry name" value="RNA_pol_Rpb1_1"/>
    <property type="match status" value="1"/>
</dbReference>
<dbReference type="Pfam" id="PF00623">
    <property type="entry name" value="RNA_pol_Rpb1_2"/>
    <property type="match status" value="2"/>
</dbReference>
<dbReference type="SMART" id="SM00663">
    <property type="entry name" value="RPOLA_N"/>
    <property type="match status" value="1"/>
</dbReference>
<dbReference type="SUPFAM" id="SSF64484">
    <property type="entry name" value="beta and beta-prime subunits of DNA dependent RNA-polymerase"/>
    <property type="match status" value="1"/>
</dbReference>
<comment type="function">
    <text evidence="1">DNA-dependent RNA polymerase catalyzes the transcription of DNA into RNA using the four ribonucleoside triphosphates as substrates.</text>
</comment>
<comment type="catalytic activity">
    <reaction evidence="2">
        <text>RNA(n) + a ribonucleoside 5'-triphosphate = RNA(n+1) + diphosphate</text>
        <dbReference type="Rhea" id="RHEA:21248"/>
        <dbReference type="Rhea" id="RHEA-COMP:14527"/>
        <dbReference type="Rhea" id="RHEA-COMP:17342"/>
        <dbReference type="ChEBI" id="CHEBI:33019"/>
        <dbReference type="ChEBI" id="CHEBI:61557"/>
        <dbReference type="ChEBI" id="CHEBI:140395"/>
        <dbReference type="EC" id="2.7.7.6"/>
    </reaction>
</comment>
<comment type="cofactor">
    <cofactor evidence="2">
        <name>Mg(2+)</name>
        <dbReference type="ChEBI" id="CHEBI:18420"/>
    </cofactor>
    <text evidence="2">Binds 1 Mg(2+) ion per subunit.</text>
</comment>
<comment type="cofactor">
    <cofactor evidence="2">
        <name>Zn(2+)</name>
        <dbReference type="ChEBI" id="CHEBI:29105"/>
    </cofactor>
    <text evidence="2">Binds 1 Zn(2+) ion per subunit.</text>
</comment>
<comment type="subunit">
    <text evidence="1">In plastids the minimal PEP RNA polymerase catalytic core is composed of four subunits: alpha, beta, beta', and beta''. When a (nuclear-encoded) sigma factor is associated with the core the holoenzyme is formed, which can initiate transcription (By similarity).</text>
</comment>
<comment type="subcellular location">
    <subcellularLocation>
        <location>Plastid</location>
    </subcellularLocation>
</comment>
<comment type="similarity">
    <text evidence="3">Belongs to the RNA polymerase beta' chain family. RpoC1 subfamily.</text>
</comment>